<name>CHO2_NEOFI</name>
<dbReference type="EC" id="2.1.1.17" evidence="1"/>
<dbReference type="EMBL" id="DS027696">
    <property type="protein sequence ID" value="EAW19164.1"/>
    <property type="molecule type" value="Genomic_DNA"/>
</dbReference>
<dbReference type="RefSeq" id="XP_001261061.1">
    <property type="nucleotide sequence ID" value="XM_001261060.1"/>
</dbReference>
<dbReference type="SMR" id="A1DIF7"/>
<dbReference type="STRING" id="331117.A1DIF7"/>
<dbReference type="EnsemblFungi" id="EAW19164">
    <property type="protein sequence ID" value="EAW19164"/>
    <property type="gene ID" value="NFIA_091230"/>
</dbReference>
<dbReference type="GeneID" id="4587619"/>
<dbReference type="KEGG" id="nfi:NFIA_091230"/>
<dbReference type="VEuPathDB" id="FungiDB:NFIA_091230"/>
<dbReference type="eggNOG" id="ENOG502QRGH">
    <property type="taxonomic scope" value="Eukaryota"/>
</dbReference>
<dbReference type="HOGENOM" id="CLU_005987_0_1_1"/>
<dbReference type="OMA" id="RIWYSVG"/>
<dbReference type="OrthoDB" id="4583at2759"/>
<dbReference type="UniPathway" id="UPA00753"/>
<dbReference type="Proteomes" id="UP000006702">
    <property type="component" value="Unassembled WGS sequence"/>
</dbReference>
<dbReference type="GO" id="GO:0032541">
    <property type="term" value="C:cortical endoplasmic reticulum"/>
    <property type="evidence" value="ECO:0007669"/>
    <property type="project" value="EnsemblFungi"/>
</dbReference>
<dbReference type="GO" id="GO:0005789">
    <property type="term" value="C:endoplasmic reticulum membrane"/>
    <property type="evidence" value="ECO:0007669"/>
    <property type="project" value="UniProtKB-SubCell"/>
</dbReference>
<dbReference type="GO" id="GO:0097038">
    <property type="term" value="C:perinuclear endoplasmic reticulum"/>
    <property type="evidence" value="ECO:0007669"/>
    <property type="project" value="EnsemblFungi"/>
</dbReference>
<dbReference type="GO" id="GO:0004608">
    <property type="term" value="F:phosphatidylethanolamine N-methyltransferase activity"/>
    <property type="evidence" value="ECO:0007669"/>
    <property type="project" value="UniProtKB-UniRule"/>
</dbReference>
<dbReference type="GO" id="GO:0032259">
    <property type="term" value="P:methylation"/>
    <property type="evidence" value="ECO:0007669"/>
    <property type="project" value="UniProtKB-KW"/>
</dbReference>
<dbReference type="GO" id="GO:0006656">
    <property type="term" value="P:phosphatidylcholine biosynthetic process"/>
    <property type="evidence" value="ECO:0007669"/>
    <property type="project" value="UniProtKB-UniRule"/>
</dbReference>
<dbReference type="FunFam" id="2.60.40.2840:FF:000006">
    <property type="entry name" value="Phosphatidylethanolamine N-methyltransferase"/>
    <property type="match status" value="1"/>
</dbReference>
<dbReference type="Gene3D" id="2.60.40.2840">
    <property type="match status" value="1"/>
</dbReference>
<dbReference type="HAMAP" id="MF_03217">
    <property type="entry name" value="PEMT"/>
    <property type="match status" value="1"/>
</dbReference>
<dbReference type="InterPro" id="IPR007318">
    <property type="entry name" value="Phopholipid_MeTrfase"/>
</dbReference>
<dbReference type="InterPro" id="IPR016219">
    <property type="entry name" value="Phosphatid-EA_MeTrfase_fun"/>
</dbReference>
<dbReference type="PANTHER" id="PTHR32138">
    <property type="entry name" value="PHOSPHATIDYLETHANOLAMINE N-METHYLTRANSFERASE"/>
    <property type="match status" value="1"/>
</dbReference>
<dbReference type="PANTHER" id="PTHR32138:SF0">
    <property type="entry name" value="PHOSPHATIDYLETHANOLAMINE N-METHYLTRANSFERASE"/>
    <property type="match status" value="1"/>
</dbReference>
<dbReference type="Pfam" id="PF04191">
    <property type="entry name" value="PEMT"/>
    <property type="match status" value="2"/>
</dbReference>
<dbReference type="PIRSF" id="PIRSF000383">
    <property type="entry name" value="PEAMT"/>
    <property type="match status" value="1"/>
</dbReference>
<dbReference type="PROSITE" id="PS51598">
    <property type="entry name" value="SAM_CHO2"/>
    <property type="match status" value="1"/>
</dbReference>
<reference key="1">
    <citation type="journal article" date="2008" name="PLoS Genet.">
        <title>Genomic islands in the pathogenic filamentous fungus Aspergillus fumigatus.</title>
        <authorList>
            <person name="Fedorova N.D."/>
            <person name="Khaldi N."/>
            <person name="Joardar V.S."/>
            <person name="Maiti R."/>
            <person name="Amedeo P."/>
            <person name="Anderson M.J."/>
            <person name="Crabtree J."/>
            <person name="Silva J.C."/>
            <person name="Badger J.H."/>
            <person name="Albarraq A."/>
            <person name="Angiuoli S."/>
            <person name="Bussey H."/>
            <person name="Bowyer P."/>
            <person name="Cotty P.J."/>
            <person name="Dyer P.S."/>
            <person name="Egan A."/>
            <person name="Galens K."/>
            <person name="Fraser-Liggett C.M."/>
            <person name="Haas B.J."/>
            <person name="Inman J.M."/>
            <person name="Kent R."/>
            <person name="Lemieux S."/>
            <person name="Malavazi I."/>
            <person name="Orvis J."/>
            <person name="Roemer T."/>
            <person name="Ronning C.M."/>
            <person name="Sundaram J.P."/>
            <person name="Sutton G."/>
            <person name="Turner G."/>
            <person name="Venter J.C."/>
            <person name="White O.R."/>
            <person name="Whitty B.R."/>
            <person name="Youngman P."/>
            <person name="Wolfe K.H."/>
            <person name="Goldman G.H."/>
            <person name="Wortman J.R."/>
            <person name="Jiang B."/>
            <person name="Denning D.W."/>
            <person name="Nierman W.C."/>
        </authorList>
    </citation>
    <scope>NUCLEOTIDE SEQUENCE [LARGE SCALE GENOMIC DNA]</scope>
    <source>
        <strain>ATCC 1020 / DSM 3700 / CBS 544.65 / FGSC A1164 / JCM 1740 / NRRL 181 / WB 181</strain>
    </source>
</reference>
<proteinExistence type="inferred from homology"/>
<organism>
    <name type="scientific">Neosartorya fischeri (strain ATCC 1020 / DSM 3700 / CBS 544.65 / FGSC A1164 / JCM 1740 / NRRL 181 / WB 181)</name>
    <name type="common">Aspergillus fischerianus</name>
    <dbReference type="NCBI Taxonomy" id="331117"/>
    <lineage>
        <taxon>Eukaryota</taxon>
        <taxon>Fungi</taxon>
        <taxon>Dikarya</taxon>
        <taxon>Ascomycota</taxon>
        <taxon>Pezizomycotina</taxon>
        <taxon>Eurotiomycetes</taxon>
        <taxon>Eurotiomycetidae</taxon>
        <taxon>Eurotiales</taxon>
        <taxon>Aspergillaceae</taxon>
        <taxon>Aspergillus</taxon>
        <taxon>Aspergillus subgen. Fumigati</taxon>
    </lineage>
</organism>
<sequence length="970" mass="109286">MDRGLSTGAHQGDDGLRERTVASQSSSAPGLEALTATGEGEVKDKAGKGKKTYGRTPGGKVFTVPQTHDMVSQLLSPSEPKNLSDIIVLVILAAHILLLWRLPAGAKVPVFAFIYLFWRGAYNAGIGWLLHNQSNHRTLVRWAEKTKIFVNPATGQNSHANLYKLIKRELKTKIPADYSFEDAPIEYNTWLVFRRLVDLILMCDFTSYCLFAIACSQRPLDEGTLMTALRWSAGIILVLFNLWVKLDAHRVVKDYAWYWGDFFFLIDQELTFDGVFEMAPHPMYSVGYAGYYGISLMAASYKVLFISILAHAAQFAFLVFVENPHIEKTYNPPPPRKRTIDQENVSITPQRSDSPSAPAPLDEQVPHAPSYSSGPPPSVHNLLGFRNLDLYRTIDTSSILIQFLVFALTVLTPSTPWFQFLFVANAAVWRIWYSVGIGLVLDRQSNCKAWTRHFVKYGESPQEAWNQWKGTYHISMVMCYASFIAAVWKMYSFPADWGYGLVLLRHVLGAGLIALQIWTSVSIYESLGEFGWFYGDFFFDESPKLTYDGIYRFLNNPERVLGLAGVWGAVLITSSGAVTFLALMSHILSLGFIQFVERPHMQKLYGRSLRRDAGLTKSLKRSLPPSLQQLHGSVDKIFDESFEFIEELIDTARPKLAAGVNTFVKDTSALFQKYPARVTISRIDEDLAGYDSRDYSLEVEGTDSLSPNDNDQSGREGANARMPLDRRGDLKNLVFEYGSPIKVKWTAPLNHSKKDWIGLYRVTDNTSREVTRVSSQGRWIAVNEGSYDNLTCEKGIVSSDILIPASQRKDNENRDLASGEVIFSGDKLFWTQGVFEFRYHHNGKHNVMAISRPFEIRISRFDEDEIPLMDPTSVELSLFPVVRNCFDRDPQIAPETVDEPFGSLVERDGRYAKRIVFAVHQMFGIEFAPEVVKADGNVHNLARRICNAKRVLAPYSLTKNGATTPTEGKE</sequence>
<gene>
    <name type="primary">CHO2</name>
    <name type="ORF">NFIA_091230</name>
</gene>
<comment type="function">
    <text evidence="1">Catalyzes the first step of the methylation pathway of phosphatidylcholine biosynthesis, the SAM-dependent methylation of phosphatidylethanolamine (PE) to phosphatidylmonomethylethanolamine (PMME).</text>
</comment>
<comment type="catalytic activity">
    <reaction evidence="1">
        <text>a 1,2-diacyl-sn-glycero-3-phosphoethanolamine + S-adenosyl-L-methionine = a 1,2-diacyl-sn-glycero-3-phospho-N-methylethanolamine + S-adenosyl-L-homocysteine + H(+)</text>
        <dbReference type="Rhea" id="RHEA:11164"/>
        <dbReference type="ChEBI" id="CHEBI:15378"/>
        <dbReference type="ChEBI" id="CHEBI:57856"/>
        <dbReference type="ChEBI" id="CHEBI:59789"/>
        <dbReference type="ChEBI" id="CHEBI:64573"/>
        <dbReference type="ChEBI" id="CHEBI:64612"/>
        <dbReference type="EC" id="2.1.1.17"/>
    </reaction>
</comment>
<comment type="pathway">
    <text evidence="1">Phospholipid metabolism; phosphatidylcholine biosynthesis.</text>
</comment>
<comment type="subcellular location">
    <subcellularLocation>
        <location evidence="1">Endoplasmic reticulum membrane</location>
        <topology evidence="1">Multi-pass membrane protein</topology>
    </subcellularLocation>
</comment>
<comment type="similarity">
    <text evidence="1">Belongs to the class VI-like SAM-binding methyltransferase superfamily. CHO2 family.</text>
</comment>
<protein>
    <recommendedName>
        <fullName evidence="1">Phosphatidylethanolamine N-methyltransferase</fullName>
        <shortName evidence="1">PE methyltransferase</shortName>
        <shortName evidence="1">PEAMT</shortName>
        <shortName evidence="1">PEMT</shortName>
        <ecNumber evidence="1">2.1.1.17</ecNumber>
    </recommendedName>
</protein>
<keyword id="KW-0256">Endoplasmic reticulum</keyword>
<keyword id="KW-0444">Lipid biosynthesis</keyword>
<keyword id="KW-0443">Lipid metabolism</keyword>
<keyword id="KW-0472">Membrane</keyword>
<keyword id="KW-0489">Methyltransferase</keyword>
<keyword id="KW-0594">Phospholipid biosynthesis</keyword>
<keyword id="KW-1208">Phospholipid metabolism</keyword>
<keyword id="KW-1185">Reference proteome</keyword>
<keyword id="KW-0949">S-adenosyl-L-methionine</keyword>
<keyword id="KW-0808">Transferase</keyword>
<keyword id="KW-0812">Transmembrane</keyword>
<keyword id="KW-1133">Transmembrane helix</keyword>
<accession>A1DIF7</accession>
<feature type="chain" id="PRO_0000405899" description="Phosphatidylethanolamine N-methyltransferase">
    <location>
        <begin position="1"/>
        <end position="970"/>
    </location>
</feature>
<feature type="topological domain" description="Lumenal" evidence="1">
    <location>
        <begin position="1"/>
        <end position="85"/>
    </location>
</feature>
<feature type="transmembrane region" description="Helical" evidence="1">
    <location>
        <begin position="86"/>
        <end position="106"/>
    </location>
</feature>
<feature type="topological domain" description="Cytoplasmic" evidence="1">
    <location>
        <begin position="107"/>
        <end position="109"/>
    </location>
</feature>
<feature type="transmembrane region" description="Helical" evidence="1">
    <location>
        <begin position="110"/>
        <end position="130"/>
    </location>
</feature>
<feature type="topological domain" description="Lumenal" evidence="1">
    <location>
        <begin position="131"/>
        <end position="195"/>
    </location>
</feature>
<feature type="transmembrane region" description="Helical" evidence="1">
    <location>
        <begin position="196"/>
        <end position="216"/>
    </location>
</feature>
<feature type="topological domain" description="Cytoplasmic" evidence="1">
    <location>
        <begin position="217"/>
        <end position="223"/>
    </location>
</feature>
<feature type="transmembrane region" description="Helical" evidence="1">
    <location>
        <begin position="224"/>
        <end position="244"/>
    </location>
</feature>
<feature type="topological domain" description="Lumenal" evidence="1">
    <location>
        <begin position="245"/>
        <end position="277"/>
    </location>
</feature>
<feature type="transmembrane region" description="Helical" evidence="1">
    <location>
        <begin position="278"/>
        <end position="298"/>
    </location>
</feature>
<feature type="topological domain" description="Cytoplasmic" evidence="1">
    <location>
        <begin position="299"/>
        <end position="300"/>
    </location>
</feature>
<feature type="transmembrane region" description="Helical" evidence="1">
    <location>
        <begin position="301"/>
        <end position="321"/>
    </location>
</feature>
<feature type="topological domain" description="Lumenal" evidence="1">
    <location>
        <begin position="322"/>
        <end position="389"/>
    </location>
</feature>
<feature type="transmembrane region" description="Helical" evidence="1">
    <location>
        <begin position="390"/>
        <end position="411"/>
    </location>
</feature>
<feature type="topological domain" description="Cytoplasmic" evidence="1">
    <location>
        <begin position="412"/>
        <end position="416"/>
    </location>
</feature>
<feature type="transmembrane region" description="Helical" evidence="1">
    <location>
        <begin position="417"/>
        <end position="441"/>
    </location>
</feature>
<feature type="topological domain" description="Lumenal" evidence="1">
    <location>
        <begin position="442"/>
        <end position="473"/>
    </location>
</feature>
<feature type="transmembrane region" description="Helical" evidence="1">
    <location>
        <begin position="474"/>
        <end position="494"/>
    </location>
</feature>
<feature type="topological domain" description="Cytoplasmic" evidence="1">
    <location>
        <begin position="495"/>
        <end position="496"/>
    </location>
</feature>
<feature type="transmembrane region" description="Helical" evidence="1">
    <location>
        <begin position="497"/>
        <end position="517"/>
    </location>
</feature>
<feature type="topological domain" description="Lumenal" evidence="1">
    <location>
        <begin position="518"/>
        <end position="562"/>
    </location>
</feature>
<feature type="transmembrane region" description="Helical" evidence="1">
    <location>
        <begin position="563"/>
        <end position="583"/>
    </location>
</feature>
<feature type="topological domain" description="Cytoplasmic" evidence="1">
    <location>
        <begin position="584"/>
        <end position="970"/>
    </location>
</feature>
<feature type="region of interest" description="Disordered" evidence="2">
    <location>
        <begin position="1"/>
        <end position="59"/>
    </location>
</feature>
<feature type="region of interest" description="Disordered" evidence="2">
    <location>
        <begin position="330"/>
        <end position="375"/>
    </location>
</feature>
<feature type="region of interest" description="Disordered" evidence="2">
    <location>
        <begin position="698"/>
        <end position="722"/>
    </location>
</feature>
<feature type="compositionally biased region" description="Basic and acidic residues" evidence="2">
    <location>
        <begin position="11"/>
        <end position="20"/>
    </location>
</feature>
<feature type="compositionally biased region" description="Polar residues" evidence="2">
    <location>
        <begin position="342"/>
        <end position="355"/>
    </location>
</feature>
<evidence type="ECO:0000255" key="1">
    <source>
        <dbReference type="HAMAP-Rule" id="MF_03217"/>
    </source>
</evidence>
<evidence type="ECO:0000256" key="2">
    <source>
        <dbReference type="SAM" id="MobiDB-lite"/>
    </source>
</evidence>